<protein>
    <recommendedName>
        <fullName>NADH-ubiquinone oxidoreductase chain 6</fullName>
        <ecNumber>7.1.1.2</ecNumber>
    </recommendedName>
    <alternativeName>
        <fullName>NADH dehydrogenase subunit 6</fullName>
    </alternativeName>
</protein>
<gene>
    <name type="primary">MT-ND6</name>
    <name type="synonym">MTND6</name>
    <name type="synonym">NADH6</name>
    <name type="synonym">ND6</name>
</gene>
<name>NU6M_PSEFG</name>
<accession>Q953I3</accession>
<reference key="1">
    <citation type="submission" date="2001-02" db="EMBL/GenBank/DDBJ databases">
        <authorList>
            <person name="Lin Y.-H."/>
        </authorList>
    </citation>
    <scope>NUCLEOTIDE SEQUENCE [GENOMIC DNA]</scope>
</reference>
<keyword id="KW-0249">Electron transport</keyword>
<keyword id="KW-0472">Membrane</keyword>
<keyword id="KW-0496">Mitochondrion</keyword>
<keyword id="KW-0520">NAD</keyword>
<keyword id="KW-0679">Respiratory chain</keyword>
<keyword id="KW-1278">Translocase</keyword>
<keyword id="KW-0812">Transmembrane</keyword>
<keyword id="KW-1133">Transmembrane helix</keyword>
<keyword id="KW-0813">Transport</keyword>
<keyword id="KW-0830">Ubiquinone</keyword>
<comment type="function">
    <text evidence="1">Core subunit of the mitochondrial membrane respiratory chain NADH dehydrogenase (Complex I) that is believed to belong to the minimal assembly required for catalysis. Complex I functions in the transfer of electrons from NADH to the respiratory chain. The immediate electron acceptor for the enzyme is believed to be ubiquinone (By similarity).</text>
</comment>
<comment type="catalytic activity">
    <reaction>
        <text>a ubiquinone + NADH + 5 H(+)(in) = a ubiquinol + NAD(+) + 4 H(+)(out)</text>
        <dbReference type="Rhea" id="RHEA:29091"/>
        <dbReference type="Rhea" id="RHEA-COMP:9565"/>
        <dbReference type="Rhea" id="RHEA-COMP:9566"/>
        <dbReference type="ChEBI" id="CHEBI:15378"/>
        <dbReference type="ChEBI" id="CHEBI:16389"/>
        <dbReference type="ChEBI" id="CHEBI:17976"/>
        <dbReference type="ChEBI" id="CHEBI:57540"/>
        <dbReference type="ChEBI" id="CHEBI:57945"/>
        <dbReference type="EC" id="7.1.1.2"/>
    </reaction>
</comment>
<comment type="subcellular location">
    <subcellularLocation>
        <location evidence="3">Mitochondrion membrane</location>
        <topology evidence="3">Multi-pass membrane protein</topology>
    </subcellularLocation>
</comment>
<comment type="similarity">
    <text evidence="3">Belongs to the complex I subunit 6 family.</text>
</comment>
<feature type="chain" id="PRO_0000118334" description="NADH-ubiquinone oxidoreductase chain 6">
    <location>
        <begin position="1"/>
        <end position="178"/>
    </location>
</feature>
<feature type="transmembrane region" description="Helical" evidence="2">
    <location>
        <begin position="1"/>
        <end position="21"/>
    </location>
</feature>
<feature type="transmembrane region" description="Helical" evidence="2">
    <location>
        <begin position="25"/>
        <end position="45"/>
    </location>
</feature>
<feature type="transmembrane region" description="Helical" evidence="2">
    <location>
        <begin position="48"/>
        <end position="68"/>
    </location>
</feature>
<feature type="transmembrane region" description="Helical" evidence="2">
    <location>
        <begin position="89"/>
        <end position="109"/>
    </location>
</feature>
<feature type="transmembrane region" description="Helical" evidence="2">
    <location>
        <begin position="152"/>
        <end position="172"/>
    </location>
</feature>
<organism>
    <name type="scientific">Pseudosoriculus fumidus</name>
    <name type="common">Taiwanese brown-toothed shrew</name>
    <name type="synonym">Episoriculus fumidus</name>
    <dbReference type="NCBI Taxonomy" id="3371150"/>
    <lineage>
        <taxon>Eukaryota</taxon>
        <taxon>Metazoa</taxon>
        <taxon>Chordata</taxon>
        <taxon>Craniata</taxon>
        <taxon>Vertebrata</taxon>
        <taxon>Euteleostomi</taxon>
        <taxon>Mammalia</taxon>
        <taxon>Eutheria</taxon>
        <taxon>Laurasiatheria</taxon>
        <taxon>Eulipotyphla</taxon>
        <taxon>Soricidae</taxon>
        <taxon>Pseudosoriculus</taxon>
    </lineage>
</organism>
<sequence>MMTYIVTILSTIFVVSFVGFSSKPSPIYGGVGLIVSGGVGCGIVLNYGGSFLGLMVFLIYLGGMLVVFGYTTAMAMEEYPEVWVSNNTVLLTFLLGLVGEVVLMIYLLLGEEEVKFEVVLNFNSEGDWVIYDTGDSGMFSEEAMGVAALYSYGYWLVIVSGWSLVTCIIVVMEITRGN</sequence>
<geneLocation type="mitochondrion"/>
<proteinExistence type="inferred from homology"/>
<evidence type="ECO:0000250" key="1"/>
<evidence type="ECO:0000255" key="2"/>
<evidence type="ECO:0000305" key="3"/>
<dbReference type="EC" id="7.1.1.2"/>
<dbReference type="EMBL" id="AF348081">
    <property type="protein sequence ID" value="AAK71093.1"/>
    <property type="molecule type" value="Genomic_DNA"/>
</dbReference>
<dbReference type="RefSeq" id="NP_149955.1">
    <property type="nucleotide sequence ID" value="NC_003040.1"/>
</dbReference>
<dbReference type="SMR" id="Q953I3"/>
<dbReference type="GeneID" id="803547"/>
<dbReference type="CTD" id="4541"/>
<dbReference type="GO" id="GO:0031966">
    <property type="term" value="C:mitochondrial membrane"/>
    <property type="evidence" value="ECO:0007669"/>
    <property type="project" value="UniProtKB-SubCell"/>
</dbReference>
<dbReference type="GO" id="GO:0008137">
    <property type="term" value="F:NADH dehydrogenase (ubiquinone) activity"/>
    <property type="evidence" value="ECO:0007669"/>
    <property type="project" value="UniProtKB-EC"/>
</dbReference>
<dbReference type="Gene3D" id="1.20.120.1200">
    <property type="entry name" value="NADH-ubiquinone/plastoquinone oxidoreductase chain 6, subunit NuoJ"/>
    <property type="match status" value="1"/>
</dbReference>
<dbReference type="InterPro" id="IPR050269">
    <property type="entry name" value="ComplexI_Subunit6"/>
</dbReference>
<dbReference type="InterPro" id="IPR001457">
    <property type="entry name" value="NADH_UbQ/plastoQ_OxRdtase_su6"/>
</dbReference>
<dbReference type="InterPro" id="IPR042106">
    <property type="entry name" value="Nuo/plastoQ_OxRdtase_6_NuoJ"/>
</dbReference>
<dbReference type="PANTHER" id="PTHR11435">
    <property type="entry name" value="NADH UBIQUINONE OXIDOREDUCTASE SUBUNIT ND6"/>
    <property type="match status" value="1"/>
</dbReference>
<dbReference type="PANTHER" id="PTHR11435:SF1">
    <property type="entry name" value="NADH-UBIQUINONE OXIDOREDUCTASE CHAIN 6"/>
    <property type="match status" value="1"/>
</dbReference>
<dbReference type="Pfam" id="PF00499">
    <property type="entry name" value="Oxidored_q3"/>
    <property type="match status" value="1"/>
</dbReference>